<feature type="chain" id="PRO_0000392917" description="Breast cancer type 2 susceptibility protein homolog">
    <location>
        <begin position="1"/>
        <end position="938"/>
    </location>
</feature>
<feature type="repeat" description="BRCA2 1" evidence="2">
    <location>
        <begin position="537"/>
        <end position="571"/>
    </location>
</feature>
<feature type="repeat" description="BRCA2 2" evidence="2">
    <location>
        <begin position="638"/>
        <end position="672"/>
    </location>
</feature>
<feature type="repeat" description="BRCA2 3" evidence="2">
    <location>
        <begin position="713"/>
        <end position="747"/>
    </location>
</feature>
<feature type="region of interest" description="Disordered" evidence="3">
    <location>
        <begin position="320"/>
        <end position="359"/>
    </location>
</feature>
<feature type="region of interest" description="Disordered" evidence="3">
    <location>
        <begin position="409"/>
        <end position="434"/>
    </location>
</feature>
<feature type="region of interest" description="Disordered" evidence="3">
    <location>
        <begin position="870"/>
        <end position="938"/>
    </location>
</feature>
<feature type="compositionally biased region" description="Basic and acidic residues" evidence="3">
    <location>
        <begin position="320"/>
        <end position="339"/>
    </location>
</feature>
<feature type="compositionally biased region" description="Basic and acidic residues" evidence="3">
    <location>
        <begin position="409"/>
        <end position="425"/>
    </location>
</feature>
<feature type="compositionally biased region" description="Polar residues" evidence="3">
    <location>
        <begin position="870"/>
        <end position="879"/>
    </location>
</feature>
<feature type="compositionally biased region" description="Basic and acidic residues" evidence="3">
    <location>
        <begin position="898"/>
        <end position="915"/>
    </location>
</feature>
<feature type="compositionally biased region" description="Basic residues" evidence="3">
    <location>
        <begin position="926"/>
        <end position="938"/>
    </location>
</feature>
<proteinExistence type="inferred from homology"/>
<sequence length="938" mass="105452">MDQKGASGSRPNRLSQGKEAYACERSATVSVAANRNNIINEMAKICEADRQTSAIARRTQVHERLAVANSDFVAVEDLILAYAEPTPEDQVEMIMRDFCSSPTYEEDEDEPSFESEPWFRFRNKRIRTYSRKRDPRSYMAVRTEKPRGTSGLSVQRDLNTSFTSMACDFDAASSQKIHEVLLNLSQYFSATAKTSSPTPVPSQIDLPTEARQDSGKECFNAEVENLRDDLLQNGFTFEASIYDNEHEQEGSEKFNVCSDAEIAEHKKLLKGPTQAEHVGKEENPNFILEGIPLSEWLTPMEPPMISKDVIKNIPDKKVKLEPSFQKEQKSSKDSNESKIRAPSKPSCDITEKNEGTTVLDQPYAAQQENLSNDGDLLEEFLFNEWHPMQCSNGPSTSNDAIQVPKEEINSIKRTDEEQPEKETPNKSRSTSSHQLSFRKTSLKFIEISEEMKIKGEKFVDKVISGLYHPSHKCNLRTEEYSDNHSQVMESTQCVEFKSALNKPIELLDKKETYDMLAKVEVGEINGKCSPLNNEAIAEPEFCGFRTASNKAIPISEKMKIKTAEFMAEFQYKETNHQNDYLVNQPNDNSTSVGLDTVLKKSIEISEEMPTKASKLVVVDTRLGEPHQPTLDPVCSDLNEPQFFGFRTASKKAIEITEAMEKRGAMFLAQSRATDQQAEWQPSDFPDIPHTSPKNEIHSINVENNKAVHTKTASETEFFGFRTASNKGIVISENTKMKVAQFMSEFQAADASTDSNKPIVISEEPSNIAAKFVDEAAAEDSPSKSTFCNVQSQENPLNIEHFKHDLFVKRSAKEEHPLCSQPLVRTPRRSLEIHSSLSQLAGQSPLDQATKKSVIARRNLLSLKRKRKIVSSTETSTSCASPDMERFAPKPSSTSTPLADRDLNRSKDCAKNRQDAEDMSPICMQPKKSRRLGLSRSRY</sequence>
<keyword id="KW-0131">Cell cycle</keyword>
<keyword id="KW-0132">Cell division</keyword>
<keyword id="KW-0227">DNA damage</keyword>
<keyword id="KW-0234">DNA repair</keyword>
<keyword id="KW-0469">Meiosis</keyword>
<keyword id="KW-0498">Mitosis</keyword>
<keyword id="KW-0539">Nucleus</keyword>
<keyword id="KW-1185">Reference proteome</keyword>
<keyword id="KW-0677">Repeat</keyword>
<gene>
    <name evidence="1" type="primary">Brca2</name>
    <name type="ORF">GM11870</name>
</gene>
<organism>
    <name type="scientific">Drosophila sechellia</name>
    <name type="common">Fruit fly</name>
    <dbReference type="NCBI Taxonomy" id="7238"/>
    <lineage>
        <taxon>Eukaryota</taxon>
        <taxon>Metazoa</taxon>
        <taxon>Ecdysozoa</taxon>
        <taxon>Arthropoda</taxon>
        <taxon>Hexapoda</taxon>
        <taxon>Insecta</taxon>
        <taxon>Pterygota</taxon>
        <taxon>Neoptera</taxon>
        <taxon>Endopterygota</taxon>
        <taxon>Diptera</taxon>
        <taxon>Brachycera</taxon>
        <taxon>Muscomorpha</taxon>
        <taxon>Ephydroidea</taxon>
        <taxon>Drosophilidae</taxon>
        <taxon>Drosophila</taxon>
        <taxon>Sophophora</taxon>
    </lineage>
</organism>
<dbReference type="EMBL" id="CH480838">
    <property type="protein sequence ID" value="EDW49206.1"/>
    <property type="molecule type" value="Genomic_DNA"/>
</dbReference>
<dbReference type="RefSeq" id="XP_002043075.1">
    <property type="nucleotide sequence ID" value="XM_002043039.1"/>
</dbReference>
<dbReference type="STRING" id="7238.B4IH30"/>
<dbReference type="EnsemblMetazoa" id="FBtr0194855">
    <property type="protein sequence ID" value="FBpp0193347"/>
    <property type="gene ID" value="FBgn0166811"/>
</dbReference>
<dbReference type="HOGENOM" id="CLU_315529_0_0_1"/>
<dbReference type="OMA" id="ECFSEDM"/>
<dbReference type="PhylomeDB" id="B4IH30"/>
<dbReference type="Proteomes" id="UP000001292">
    <property type="component" value="Unassembled WGS sequence"/>
</dbReference>
<dbReference type="GO" id="GO:0005634">
    <property type="term" value="C:nucleus"/>
    <property type="evidence" value="ECO:0000250"/>
    <property type="project" value="UniProtKB"/>
</dbReference>
<dbReference type="GO" id="GO:0051301">
    <property type="term" value="P:cell division"/>
    <property type="evidence" value="ECO:0007669"/>
    <property type="project" value="UniProtKB-KW"/>
</dbReference>
<dbReference type="GO" id="GO:0043150">
    <property type="term" value="P:DNA synthesis involved in double-strand break repair via homologous recombination"/>
    <property type="evidence" value="ECO:0000250"/>
    <property type="project" value="UniProtKB"/>
</dbReference>
<dbReference type="GO" id="GO:0010778">
    <property type="term" value="P:meiotic DNA repair synthesis involved in reciprocal meiotic recombination"/>
    <property type="evidence" value="ECO:0000250"/>
    <property type="project" value="UniProtKB"/>
</dbReference>
<dbReference type="GO" id="GO:0051598">
    <property type="term" value="P:meiotic recombination checkpoint signaling"/>
    <property type="evidence" value="ECO:0000250"/>
    <property type="project" value="UniProtKB"/>
</dbReference>
<dbReference type="GO" id="GO:0006355">
    <property type="term" value="P:regulation of DNA-templated transcription"/>
    <property type="evidence" value="ECO:0007669"/>
    <property type="project" value="TreeGrafter"/>
</dbReference>
<dbReference type="GO" id="GO:1901563">
    <property type="term" value="P:response to camptothecin"/>
    <property type="evidence" value="ECO:0007669"/>
    <property type="project" value="EnsemblMetazoa"/>
</dbReference>
<dbReference type="InterPro" id="IPR015525">
    <property type="entry name" value="BRCA2"/>
</dbReference>
<dbReference type="InterPro" id="IPR002093">
    <property type="entry name" value="BRCA2_repeat"/>
</dbReference>
<dbReference type="PANTHER" id="PTHR11289:SF0">
    <property type="entry name" value="BREAST CANCER TYPE 2 SUSCEPTIBILITY PROTEIN"/>
    <property type="match status" value="1"/>
</dbReference>
<dbReference type="PANTHER" id="PTHR11289">
    <property type="entry name" value="BREAST CANCER TYPE 2 SUSCEPTIBILITY PROTEIN BRCA2"/>
    <property type="match status" value="1"/>
</dbReference>
<dbReference type="PROSITE" id="PS50138">
    <property type="entry name" value="BRCA2_REPEAT"/>
    <property type="match status" value="1"/>
</dbReference>
<comment type="function">
    <text evidence="1">Involved in and required for double-strand break repair by meiotic and mitotic homologous recombination. During meiosis, has a dual role in the repair of meiotic double-stranded breaks and the efficient activation of the meiotic recombination checkpoint (By similarity).</text>
</comment>
<comment type="subunit">
    <text evidence="1">Interacts with Rad9 and spn-A/Rad51.</text>
</comment>
<comment type="subcellular location">
    <subcellularLocation>
        <location evidence="1">Nucleus</location>
    </subcellularLocation>
    <text evidence="1">Brca2 and spn-A become recruited to nuclear foci after DNA damage.</text>
</comment>
<name>BRCA2_DROSE</name>
<reference evidence="4" key="1">
    <citation type="journal article" date="2007" name="Nature">
        <title>Evolution of genes and genomes on the Drosophila phylogeny.</title>
        <authorList>
            <consortium name="Drosophila 12 genomes consortium"/>
        </authorList>
    </citation>
    <scope>NUCLEOTIDE SEQUENCE [LARGE SCALE GENOMIC DNA]</scope>
    <source>
        <strain evidence="4">Rob3c / Tucson 14021-0248.25</strain>
    </source>
</reference>
<protein>
    <recommendedName>
        <fullName evidence="1">Breast cancer type 2 susceptibility protein homolog</fullName>
    </recommendedName>
</protein>
<accession>B4IH30</accession>
<evidence type="ECO:0000250" key="1">
    <source>
        <dbReference type="UniProtKB" id="Q9W157"/>
    </source>
</evidence>
<evidence type="ECO:0000255" key="2"/>
<evidence type="ECO:0000256" key="3">
    <source>
        <dbReference type="SAM" id="MobiDB-lite"/>
    </source>
</evidence>
<evidence type="ECO:0000312" key="4">
    <source>
        <dbReference type="EMBL" id="EDW49206.1"/>
    </source>
</evidence>